<name>NUDC_PSEU2</name>
<evidence type="ECO:0000255" key="1">
    <source>
        <dbReference type="HAMAP-Rule" id="MF_00297"/>
    </source>
</evidence>
<comment type="function">
    <text evidence="1">mRNA decapping enzyme that specifically removes the nicotinamide adenine dinucleotide (NAD) cap from a subset of mRNAs by hydrolyzing the diphosphate linkage to produce nicotinamide mononucleotide (NMN) and 5' monophosphate mRNA. The NAD-cap is present at the 5'-end of some mRNAs and stabilizes RNA against 5'-processing. Has preference for mRNAs with a 5'-end purine. Catalyzes the hydrolysis of a broad range of dinucleotide pyrophosphates.</text>
</comment>
<comment type="catalytic activity">
    <reaction evidence="1">
        <text>a 5'-end NAD(+)-phospho-ribonucleoside in mRNA + H2O = a 5'-end phospho-adenosine-phospho-ribonucleoside in mRNA + beta-nicotinamide D-ribonucleotide + 2 H(+)</text>
        <dbReference type="Rhea" id="RHEA:60876"/>
        <dbReference type="Rhea" id="RHEA-COMP:15698"/>
        <dbReference type="Rhea" id="RHEA-COMP:15719"/>
        <dbReference type="ChEBI" id="CHEBI:14649"/>
        <dbReference type="ChEBI" id="CHEBI:15377"/>
        <dbReference type="ChEBI" id="CHEBI:15378"/>
        <dbReference type="ChEBI" id="CHEBI:144029"/>
        <dbReference type="ChEBI" id="CHEBI:144051"/>
    </reaction>
    <physiologicalReaction direction="left-to-right" evidence="1">
        <dbReference type="Rhea" id="RHEA:60877"/>
    </physiologicalReaction>
</comment>
<comment type="catalytic activity">
    <reaction evidence="1">
        <text>NAD(+) + H2O = beta-nicotinamide D-ribonucleotide + AMP + 2 H(+)</text>
        <dbReference type="Rhea" id="RHEA:11800"/>
        <dbReference type="ChEBI" id="CHEBI:14649"/>
        <dbReference type="ChEBI" id="CHEBI:15377"/>
        <dbReference type="ChEBI" id="CHEBI:15378"/>
        <dbReference type="ChEBI" id="CHEBI:57540"/>
        <dbReference type="ChEBI" id="CHEBI:456215"/>
        <dbReference type="EC" id="3.6.1.22"/>
    </reaction>
</comment>
<comment type="catalytic activity">
    <reaction evidence="1">
        <text>NADH + H2O = reduced beta-nicotinamide D-ribonucleotide + AMP + 2 H(+)</text>
        <dbReference type="Rhea" id="RHEA:48868"/>
        <dbReference type="ChEBI" id="CHEBI:15377"/>
        <dbReference type="ChEBI" id="CHEBI:15378"/>
        <dbReference type="ChEBI" id="CHEBI:57945"/>
        <dbReference type="ChEBI" id="CHEBI:90832"/>
        <dbReference type="ChEBI" id="CHEBI:456215"/>
        <dbReference type="EC" id="3.6.1.22"/>
    </reaction>
</comment>
<comment type="cofactor">
    <cofactor evidence="1">
        <name>Mg(2+)</name>
        <dbReference type="ChEBI" id="CHEBI:18420"/>
    </cofactor>
    <cofactor evidence="1">
        <name>Mn(2+)</name>
        <dbReference type="ChEBI" id="CHEBI:29035"/>
    </cofactor>
    <text evidence="1">Divalent metal cations. Mg(2+) or Mn(2+).</text>
</comment>
<comment type="cofactor">
    <cofactor evidence="1">
        <name>Zn(2+)</name>
        <dbReference type="ChEBI" id="CHEBI:29105"/>
    </cofactor>
    <text evidence="1">Binds 1 zinc ion per subunit.</text>
</comment>
<comment type="subunit">
    <text evidence="1">Homodimer.</text>
</comment>
<comment type="similarity">
    <text evidence="1">Belongs to the Nudix hydrolase family. NudC subfamily.</text>
</comment>
<feature type="chain" id="PRO_0000232119" description="NAD-capped RNA hydrolase NudC">
    <location>
        <begin position="1"/>
        <end position="278"/>
    </location>
</feature>
<feature type="domain" description="Nudix hydrolase" evidence="1">
    <location>
        <begin position="141"/>
        <end position="264"/>
    </location>
</feature>
<feature type="short sequence motif" description="Nudix box" evidence="1">
    <location>
        <begin position="175"/>
        <end position="196"/>
    </location>
</feature>
<feature type="binding site" evidence="1">
    <location>
        <position position="84"/>
    </location>
    <ligand>
        <name>substrate</name>
    </ligand>
</feature>
<feature type="binding site" evidence="1">
    <location>
        <position position="114"/>
    </location>
    <ligand>
        <name>Zn(2+)</name>
        <dbReference type="ChEBI" id="CHEBI:29105"/>
    </ligand>
</feature>
<feature type="binding site" evidence="1">
    <location>
        <position position="117"/>
    </location>
    <ligand>
        <name>Zn(2+)</name>
        <dbReference type="ChEBI" id="CHEBI:29105"/>
    </ligand>
</feature>
<feature type="binding site" evidence="1">
    <location>
        <position position="127"/>
    </location>
    <ligand>
        <name>substrate</name>
    </ligand>
</feature>
<feature type="binding site" evidence="1">
    <location>
        <position position="132"/>
    </location>
    <ligand>
        <name>Zn(2+)</name>
        <dbReference type="ChEBI" id="CHEBI:29105"/>
    </ligand>
</feature>
<feature type="binding site" evidence="1">
    <location>
        <position position="140"/>
    </location>
    <ligand>
        <name>substrate</name>
    </ligand>
</feature>
<feature type="binding site" evidence="1">
    <location>
        <position position="174"/>
    </location>
    <ligand>
        <name>a divalent metal cation</name>
        <dbReference type="ChEBI" id="CHEBI:60240"/>
        <label>1</label>
    </ligand>
</feature>
<feature type="binding site" evidence="1">
    <location>
        <position position="190"/>
    </location>
    <ligand>
        <name>a divalent metal cation</name>
        <dbReference type="ChEBI" id="CHEBI:60240"/>
        <label>2</label>
    </ligand>
</feature>
<feature type="binding site" evidence="1">
    <location>
        <position position="190"/>
    </location>
    <ligand>
        <name>a divalent metal cation</name>
        <dbReference type="ChEBI" id="CHEBI:60240"/>
        <label>3</label>
    </ligand>
</feature>
<feature type="binding site" evidence="1">
    <location>
        <position position="194"/>
    </location>
    <ligand>
        <name>a divalent metal cation</name>
        <dbReference type="ChEBI" id="CHEBI:60240"/>
        <label>1</label>
    </ligand>
</feature>
<feature type="binding site" evidence="1">
    <location>
        <position position="194"/>
    </location>
    <ligand>
        <name>a divalent metal cation</name>
        <dbReference type="ChEBI" id="CHEBI:60240"/>
        <label>3</label>
    </ligand>
</feature>
<feature type="binding site" evidence="1">
    <location>
        <begin position="208"/>
        <end position="215"/>
    </location>
    <ligand>
        <name>substrate</name>
    </ligand>
</feature>
<feature type="binding site" evidence="1">
    <location>
        <position position="235"/>
    </location>
    <ligand>
        <name>a divalent metal cation</name>
        <dbReference type="ChEBI" id="CHEBI:60240"/>
        <label>1</label>
    </ligand>
</feature>
<feature type="binding site" evidence="1">
    <location>
        <position position="235"/>
    </location>
    <ligand>
        <name>a divalent metal cation</name>
        <dbReference type="ChEBI" id="CHEBI:60240"/>
        <label>3</label>
    </ligand>
</feature>
<feature type="binding site" evidence="1">
    <location>
        <position position="257"/>
    </location>
    <ligand>
        <name>substrate</name>
    </ligand>
</feature>
<accession>Q4ZTN0</accession>
<reference key="1">
    <citation type="journal article" date="2005" name="Proc. Natl. Acad. Sci. U.S.A.">
        <title>Comparison of the complete genome sequences of Pseudomonas syringae pv. syringae B728a and pv. tomato DC3000.</title>
        <authorList>
            <person name="Feil H."/>
            <person name="Feil W.S."/>
            <person name="Chain P."/>
            <person name="Larimer F."/>
            <person name="Dibartolo G."/>
            <person name="Copeland A."/>
            <person name="Lykidis A."/>
            <person name="Trong S."/>
            <person name="Nolan M."/>
            <person name="Goltsman E."/>
            <person name="Thiel J."/>
            <person name="Malfatti S."/>
            <person name="Loper J.E."/>
            <person name="Lapidus A."/>
            <person name="Detter J.C."/>
            <person name="Land M."/>
            <person name="Richardson P.M."/>
            <person name="Kyrpides N.C."/>
            <person name="Ivanova N."/>
            <person name="Lindow S.E."/>
        </authorList>
    </citation>
    <scope>NUCLEOTIDE SEQUENCE [LARGE SCALE GENOMIC DNA]</scope>
    <source>
        <strain>B728a</strain>
    </source>
</reference>
<organism>
    <name type="scientific">Pseudomonas syringae pv. syringae (strain B728a)</name>
    <dbReference type="NCBI Taxonomy" id="205918"/>
    <lineage>
        <taxon>Bacteria</taxon>
        <taxon>Pseudomonadati</taxon>
        <taxon>Pseudomonadota</taxon>
        <taxon>Gammaproteobacteria</taxon>
        <taxon>Pseudomonadales</taxon>
        <taxon>Pseudomonadaceae</taxon>
        <taxon>Pseudomonas</taxon>
        <taxon>Pseudomonas syringae</taxon>
    </lineage>
</organism>
<gene>
    <name evidence="1" type="primary">nudC</name>
    <name type="ordered locus">Psyr_2453</name>
</gene>
<keyword id="KW-0378">Hydrolase</keyword>
<keyword id="KW-0460">Magnesium</keyword>
<keyword id="KW-0464">Manganese</keyword>
<keyword id="KW-0479">Metal-binding</keyword>
<keyword id="KW-0520">NAD</keyword>
<keyword id="KW-0862">Zinc</keyword>
<dbReference type="EC" id="3.6.1.-" evidence="1"/>
<dbReference type="EC" id="3.6.1.22" evidence="1"/>
<dbReference type="EMBL" id="CP000075">
    <property type="protein sequence ID" value="AAY37492.1"/>
    <property type="molecule type" value="Genomic_DNA"/>
</dbReference>
<dbReference type="RefSeq" id="WP_011267693.1">
    <property type="nucleotide sequence ID" value="NC_007005.1"/>
</dbReference>
<dbReference type="RefSeq" id="YP_235530.1">
    <property type="nucleotide sequence ID" value="NC_007005.1"/>
</dbReference>
<dbReference type="SMR" id="Q4ZTN0"/>
<dbReference type="STRING" id="205918.Psyr_2453"/>
<dbReference type="KEGG" id="psb:Psyr_2453"/>
<dbReference type="PATRIC" id="fig|205918.7.peg.2510"/>
<dbReference type="eggNOG" id="COG2816">
    <property type="taxonomic scope" value="Bacteria"/>
</dbReference>
<dbReference type="HOGENOM" id="CLU_037162_0_1_6"/>
<dbReference type="OrthoDB" id="9791656at2"/>
<dbReference type="Proteomes" id="UP000000426">
    <property type="component" value="Chromosome"/>
</dbReference>
<dbReference type="GO" id="GO:0005829">
    <property type="term" value="C:cytosol"/>
    <property type="evidence" value="ECO:0007669"/>
    <property type="project" value="TreeGrafter"/>
</dbReference>
<dbReference type="GO" id="GO:0000287">
    <property type="term" value="F:magnesium ion binding"/>
    <property type="evidence" value="ECO:0007669"/>
    <property type="project" value="UniProtKB-UniRule"/>
</dbReference>
<dbReference type="GO" id="GO:0030145">
    <property type="term" value="F:manganese ion binding"/>
    <property type="evidence" value="ECO:0007669"/>
    <property type="project" value="UniProtKB-UniRule"/>
</dbReference>
<dbReference type="GO" id="GO:0000210">
    <property type="term" value="F:NAD+ diphosphatase activity"/>
    <property type="evidence" value="ECO:0007669"/>
    <property type="project" value="UniProtKB-UniRule"/>
</dbReference>
<dbReference type="GO" id="GO:0035529">
    <property type="term" value="F:NADH pyrophosphatase activity"/>
    <property type="evidence" value="ECO:0007669"/>
    <property type="project" value="TreeGrafter"/>
</dbReference>
<dbReference type="GO" id="GO:0110153">
    <property type="term" value="F:RNA NAD-cap (NMN-forming) hydrolase activity"/>
    <property type="evidence" value="ECO:0007669"/>
    <property type="project" value="RHEA"/>
</dbReference>
<dbReference type="GO" id="GO:0008270">
    <property type="term" value="F:zinc ion binding"/>
    <property type="evidence" value="ECO:0007669"/>
    <property type="project" value="UniProtKB-UniRule"/>
</dbReference>
<dbReference type="GO" id="GO:0019677">
    <property type="term" value="P:NAD catabolic process"/>
    <property type="evidence" value="ECO:0007669"/>
    <property type="project" value="TreeGrafter"/>
</dbReference>
<dbReference type="GO" id="GO:0006734">
    <property type="term" value="P:NADH metabolic process"/>
    <property type="evidence" value="ECO:0007669"/>
    <property type="project" value="TreeGrafter"/>
</dbReference>
<dbReference type="GO" id="GO:0006742">
    <property type="term" value="P:NADP catabolic process"/>
    <property type="evidence" value="ECO:0007669"/>
    <property type="project" value="TreeGrafter"/>
</dbReference>
<dbReference type="CDD" id="cd03429">
    <property type="entry name" value="NUDIX_NADH_pyrophosphatase_Nudt13"/>
    <property type="match status" value="1"/>
</dbReference>
<dbReference type="Gene3D" id="3.90.79.20">
    <property type="match status" value="1"/>
</dbReference>
<dbReference type="Gene3D" id="3.90.79.10">
    <property type="entry name" value="Nucleoside Triphosphate Pyrophosphohydrolase"/>
    <property type="match status" value="1"/>
</dbReference>
<dbReference type="HAMAP" id="MF_00297">
    <property type="entry name" value="Nudix_NudC"/>
    <property type="match status" value="1"/>
</dbReference>
<dbReference type="InterPro" id="IPR050241">
    <property type="entry name" value="NAD-cap_RNA_hydrolase_NudC"/>
</dbReference>
<dbReference type="InterPro" id="IPR015375">
    <property type="entry name" value="NADH_PPase-like_N"/>
</dbReference>
<dbReference type="InterPro" id="IPR049734">
    <property type="entry name" value="NudC-like_C"/>
</dbReference>
<dbReference type="InterPro" id="IPR015797">
    <property type="entry name" value="NUDIX_hydrolase-like_dom_sf"/>
</dbReference>
<dbReference type="InterPro" id="IPR000086">
    <property type="entry name" value="NUDIX_hydrolase_dom"/>
</dbReference>
<dbReference type="InterPro" id="IPR022925">
    <property type="entry name" value="RNA_Hydrolase_NudC"/>
</dbReference>
<dbReference type="InterPro" id="IPR015376">
    <property type="entry name" value="Znr_NADH_PPase"/>
</dbReference>
<dbReference type="NCBIfam" id="NF001299">
    <property type="entry name" value="PRK00241.1"/>
    <property type="match status" value="1"/>
</dbReference>
<dbReference type="PANTHER" id="PTHR42904:SF6">
    <property type="entry name" value="NAD-CAPPED RNA HYDROLASE NUDT12"/>
    <property type="match status" value="1"/>
</dbReference>
<dbReference type="PANTHER" id="PTHR42904">
    <property type="entry name" value="NUDIX HYDROLASE, NUDC SUBFAMILY"/>
    <property type="match status" value="1"/>
</dbReference>
<dbReference type="Pfam" id="PF00293">
    <property type="entry name" value="NUDIX"/>
    <property type="match status" value="1"/>
</dbReference>
<dbReference type="Pfam" id="PF09296">
    <property type="entry name" value="NUDIX-like"/>
    <property type="match status" value="1"/>
</dbReference>
<dbReference type="Pfam" id="PF09297">
    <property type="entry name" value="Zn_ribbon_NUD"/>
    <property type="match status" value="1"/>
</dbReference>
<dbReference type="SUPFAM" id="SSF55811">
    <property type="entry name" value="Nudix"/>
    <property type="match status" value="2"/>
</dbReference>
<dbReference type="PROSITE" id="PS51462">
    <property type="entry name" value="NUDIX"/>
    <property type="match status" value="1"/>
</dbReference>
<proteinExistence type="inferred from homology"/>
<sequence>MSRPERWTTAVLDVEAPGGLAVVQGDQGFLLDANGVMFPRGWLAGQDLPVQSEHGIGYFEGEPVYLLVLERSVAVEGCAWQGLRQFMLEGDFAVFQMLGYAAQVSTWAREHRFCGACGRATVQIRGERAMFCEHDNLRLYPRISPSMIVLVTRGDEILLARSPRFVTGMYSALAGFVEPGESAEDCVHREVMEEVQVRIKNLRYRGSQCWPFPHSMMLGFHAEYESGEIVPQAEEIEDARWFHVDDLPPLPANRSIARYLIEAYLAERSGAPEPVLPG</sequence>
<protein>
    <recommendedName>
        <fullName evidence="1">NAD-capped RNA hydrolase NudC</fullName>
        <shortName evidence="1">DeNADding enzyme NudC</shortName>
        <ecNumber evidence="1">3.6.1.-</ecNumber>
    </recommendedName>
    <alternativeName>
        <fullName evidence="1">NADH pyrophosphatase</fullName>
        <ecNumber evidence="1">3.6.1.22</ecNumber>
    </alternativeName>
</protein>